<keyword id="KW-1185">Reference proteome</keyword>
<keyword id="KW-0687">Ribonucleoprotein</keyword>
<keyword id="KW-0689">Ribosomal protein</keyword>
<keyword id="KW-0694">RNA-binding</keyword>
<keyword id="KW-0699">rRNA-binding</keyword>
<reference key="1">
    <citation type="journal article" date="2002" name="Proc. Natl. Acad. Sci. U.S.A.">
        <title>Complete genome sequence of Clostridium perfringens, an anaerobic flesh-eater.</title>
        <authorList>
            <person name="Shimizu T."/>
            <person name="Ohtani K."/>
            <person name="Hirakawa H."/>
            <person name="Ohshima K."/>
            <person name="Yamashita A."/>
            <person name="Shiba T."/>
            <person name="Ogasawara N."/>
            <person name="Hattori M."/>
            <person name="Kuhara S."/>
            <person name="Hayashi H."/>
        </authorList>
    </citation>
    <scope>NUCLEOTIDE SEQUENCE [LARGE SCALE GENOMIC DNA]</scope>
    <source>
        <strain>13 / Type A</strain>
    </source>
</reference>
<protein>
    <recommendedName>
        <fullName evidence="1">Small ribosomal subunit protein bS6</fullName>
    </recommendedName>
    <alternativeName>
        <fullName evidence="2">30S ribosomal protein S6</fullName>
    </alternativeName>
</protein>
<accession>Q8XH43</accession>
<dbReference type="EMBL" id="BA000016">
    <property type="protein sequence ID" value="BAB82348.1"/>
    <property type="status" value="ALT_INIT"/>
    <property type="molecule type" value="Genomic_DNA"/>
</dbReference>
<dbReference type="RefSeq" id="WP_003479405.1">
    <property type="nucleotide sequence ID" value="NC_003366.1"/>
</dbReference>
<dbReference type="SMR" id="Q8XH43"/>
<dbReference type="STRING" id="195102.gene:10491986"/>
<dbReference type="GeneID" id="93000743"/>
<dbReference type="KEGG" id="cpe:CPE2642"/>
<dbReference type="HOGENOM" id="CLU_113441_5_1_9"/>
<dbReference type="Proteomes" id="UP000000818">
    <property type="component" value="Chromosome"/>
</dbReference>
<dbReference type="GO" id="GO:0005737">
    <property type="term" value="C:cytoplasm"/>
    <property type="evidence" value="ECO:0007669"/>
    <property type="project" value="UniProtKB-ARBA"/>
</dbReference>
<dbReference type="GO" id="GO:1990904">
    <property type="term" value="C:ribonucleoprotein complex"/>
    <property type="evidence" value="ECO:0007669"/>
    <property type="project" value="UniProtKB-KW"/>
</dbReference>
<dbReference type="GO" id="GO:0005840">
    <property type="term" value="C:ribosome"/>
    <property type="evidence" value="ECO:0007669"/>
    <property type="project" value="UniProtKB-KW"/>
</dbReference>
<dbReference type="GO" id="GO:0070181">
    <property type="term" value="F:small ribosomal subunit rRNA binding"/>
    <property type="evidence" value="ECO:0007669"/>
    <property type="project" value="TreeGrafter"/>
</dbReference>
<dbReference type="GO" id="GO:0003735">
    <property type="term" value="F:structural constituent of ribosome"/>
    <property type="evidence" value="ECO:0007669"/>
    <property type="project" value="InterPro"/>
</dbReference>
<dbReference type="GO" id="GO:0006412">
    <property type="term" value="P:translation"/>
    <property type="evidence" value="ECO:0007669"/>
    <property type="project" value="UniProtKB-UniRule"/>
</dbReference>
<dbReference type="CDD" id="cd00473">
    <property type="entry name" value="bS6"/>
    <property type="match status" value="1"/>
</dbReference>
<dbReference type="FunFam" id="3.30.70.60:FF:000002">
    <property type="entry name" value="30S ribosomal protein S6"/>
    <property type="match status" value="1"/>
</dbReference>
<dbReference type="Gene3D" id="3.30.70.60">
    <property type="match status" value="1"/>
</dbReference>
<dbReference type="HAMAP" id="MF_00360">
    <property type="entry name" value="Ribosomal_bS6"/>
    <property type="match status" value="1"/>
</dbReference>
<dbReference type="InterPro" id="IPR000529">
    <property type="entry name" value="Ribosomal_bS6"/>
</dbReference>
<dbReference type="InterPro" id="IPR035980">
    <property type="entry name" value="Ribosomal_bS6_sf"/>
</dbReference>
<dbReference type="InterPro" id="IPR020814">
    <property type="entry name" value="Ribosomal_S6_plastid/chlpt"/>
</dbReference>
<dbReference type="InterPro" id="IPR014717">
    <property type="entry name" value="Transl_elong_EF1B/ribsomal_bS6"/>
</dbReference>
<dbReference type="NCBIfam" id="TIGR00166">
    <property type="entry name" value="S6"/>
    <property type="match status" value="1"/>
</dbReference>
<dbReference type="PANTHER" id="PTHR21011">
    <property type="entry name" value="MITOCHONDRIAL 28S RIBOSOMAL PROTEIN S6"/>
    <property type="match status" value="1"/>
</dbReference>
<dbReference type="PANTHER" id="PTHR21011:SF1">
    <property type="entry name" value="SMALL RIBOSOMAL SUBUNIT PROTEIN BS6M"/>
    <property type="match status" value="1"/>
</dbReference>
<dbReference type="Pfam" id="PF01250">
    <property type="entry name" value="Ribosomal_S6"/>
    <property type="match status" value="1"/>
</dbReference>
<dbReference type="SUPFAM" id="SSF54995">
    <property type="entry name" value="Ribosomal protein S6"/>
    <property type="match status" value="1"/>
</dbReference>
<organism>
    <name type="scientific">Clostridium perfringens (strain 13 / Type A)</name>
    <dbReference type="NCBI Taxonomy" id="195102"/>
    <lineage>
        <taxon>Bacteria</taxon>
        <taxon>Bacillati</taxon>
        <taxon>Bacillota</taxon>
        <taxon>Clostridia</taxon>
        <taxon>Eubacteriales</taxon>
        <taxon>Clostridiaceae</taxon>
        <taxon>Clostridium</taxon>
    </lineage>
</organism>
<evidence type="ECO:0000255" key="1">
    <source>
        <dbReference type="HAMAP-Rule" id="MF_00360"/>
    </source>
</evidence>
<evidence type="ECO:0000305" key="2"/>
<feature type="chain" id="PRO_0000176756" description="Small ribosomal subunit protein bS6">
    <location>
        <begin position="1"/>
        <end position="95"/>
    </location>
</feature>
<sequence>MRKYETIFVAHPSLDEEAVKALIEKFKGVIENGNGTVDNVDFWGKRKLAYEIAKVNEGYYTLINFTANPELPKELDRVFGITDGIIRHIIVKEEQ</sequence>
<proteinExistence type="inferred from homology"/>
<comment type="function">
    <text evidence="1">Binds together with bS18 to 16S ribosomal RNA.</text>
</comment>
<comment type="similarity">
    <text evidence="1">Belongs to the bacterial ribosomal protein bS6 family.</text>
</comment>
<comment type="sequence caution" evidence="2">
    <conflict type="erroneous initiation">
        <sequence resource="EMBL-CDS" id="BAB82348"/>
    </conflict>
</comment>
<gene>
    <name evidence="1" type="primary">rpsF</name>
    <name type="ordered locus">CPE2642</name>
</gene>
<name>RS6_CLOPE</name>